<reference key="1">
    <citation type="journal article" date="2006" name="BMC Evol. Biol.">
        <title>Phylogenetic analyses of Vitis (Vitaceae) based on complete chloroplast genome sequences: effects of taxon sampling and phylogenetic methods on resolving relationships among rosids.</title>
        <authorList>
            <person name="Jansen R.K."/>
            <person name="Kaittanis C."/>
            <person name="Lee S.-B."/>
            <person name="Saski C."/>
            <person name="Tomkins J."/>
            <person name="Alverson A.J."/>
            <person name="Daniell H."/>
        </authorList>
    </citation>
    <scope>NUCLEOTIDE SEQUENCE [LARGE SCALE GENOMIC DNA]</scope>
    <source>
        <strain>cv. Maxxa</strain>
    </source>
</reference>
<evidence type="ECO:0000255" key="1">
    <source>
        <dbReference type="HAMAP-Rule" id="MF_00437"/>
    </source>
</evidence>
<comment type="function">
    <text evidence="1">Seems to be required for the assembly of the photosystem I complex.</text>
</comment>
<comment type="subcellular location">
    <subcellularLocation>
        <location evidence="1">Plastid</location>
        <location evidence="1">Chloroplast thylakoid membrane</location>
        <topology evidence="1">Multi-pass membrane protein</topology>
    </subcellularLocation>
</comment>
<comment type="similarity">
    <text evidence="1">Belongs to the Ycf4 family.</text>
</comment>
<accession>Q0ZJ09</accession>
<geneLocation type="chloroplast"/>
<dbReference type="EMBL" id="DQ424856">
    <property type="protein sequence ID" value="ABE47545.1"/>
    <property type="molecule type" value="Genomic_DNA"/>
</dbReference>
<dbReference type="RefSeq" id="YP_567087.1">
    <property type="nucleotide sequence ID" value="NC_007957.1"/>
</dbReference>
<dbReference type="FunCoup" id="Q0ZJ09">
    <property type="interactions" value="84"/>
</dbReference>
<dbReference type="STRING" id="29760.Q0ZJ09"/>
<dbReference type="PaxDb" id="29760-VIT_12s0059g02430.t01"/>
<dbReference type="EnsemblPlants" id="Vitvi00g04189_t001">
    <property type="protein sequence ID" value="Vitvi00g04189_P001"/>
    <property type="gene ID" value="Vitvi00g04189"/>
</dbReference>
<dbReference type="GeneID" id="4025048"/>
<dbReference type="Gramene" id="Vitvi00g04189_t001">
    <property type="protein sequence ID" value="Vitvi00g04189_P001"/>
    <property type="gene ID" value="Vitvi00g04189"/>
</dbReference>
<dbReference type="KEGG" id="vvi:4025048"/>
<dbReference type="eggNOG" id="ENOG502QWGG">
    <property type="taxonomic scope" value="Eukaryota"/>
</dbReference>
<dbReference type="InParanoid" id="Q0ZJ09"/>
<dbReference type="OrthoDB" id="1414221at2759"/>
<dbReference type="Proteomes" id="UP000009183">
    <property type="component" value="Chloroplast"/>
</dbReference>
<dbReference type="ExpressionAtlas" id="Q0ZJ09">
    <property type="expression patterns" value="baseline and differential"/>
</dbReference>
<dbReference type="GO" id="GO:0009535">
    <property type="term" value="C:chloroplast thylakoid membrane"/>
    <property type="evidence" value="ECO:0007669"/>
    <property type="project" value="UniProtKB-SubCell"/>
</dbReference>
<dbReference type="GO" id="GO:0009522">
    <property type="term" value="C:photosystem I"/>
    <property type="evidence" value="ECO:0007669"/>
    <property type="project" value="InterPro"/>
</dbReference>
<dbReference type="GO" id="GO:0015979">
    <property type="term" value="P:photosynthesis"/>
    <property type="evidence" value="ECO:0007669"/>
    <property type="project" value="UniProtKB-UniRule"/>
</dbReference>
<dbReference type="HAMAP" id="MF_00437">
    <property type="entry name" value="Ycf4"/>
    <property type="match status" value="1"/>
</dbReference>
<dbReference type="InterPro" id="IPR003359">
    <property type="entry name" value="PSI_Ycf4_assembly"/>
</dbReference>
<dbReference type="PANTHER" id="PTHR33288">
    <property type="match status" value="1"/>
</dbReference>
<dbReference type="PANTHER" id="PTHR33288:SF4">
    <property type="entry name" value="PHOTOSYSTEM I ASSEMBLY PROTEIN YCF4"/>
    <property type="match status" value="1"/>
</dbReference>
<dbReference type="Pfam" id="PF02392">
    <property type="entry name" value="Ycf4"/>
    <property type="match status" value="1"/>
</dbReference>
<sequence length="186" mass="21647">MSWRSERIWIELITGSRKTSNFCWAFILFLGSLGFLLVGTSSYLGRNLISLFPSQQIIFFPQGIVMSFYGIAGLFISSYLWCTISWNVGSGYDRFDRKEGIVCIFRWGFPGKNRRIFLRLLMKDIQSIRIAVKEDIYARRILVLYMEIRGQGAIPLTRTDENLTPREMEQKAAELAYFLRVPIEVF</sequence>
<organism>
    <name type="scientific">Vitis vinifera</name>
    <name type="common">Grape</name>
    <dbReference type="NCBI Taxonomy" id="29760"/>
    <lineage>
        <taxon>Eukaryota</taxon>
        <taxon>Viridiplantae</taxon>
        <taxon>Streptophyta</taxon>
        <taxon>Embryophyta</taxon>
        <taxon>Tracheophyta</taxon>
        <taxon>Spermatophyta</taxon>
        <taxon>Magnoliopsida</taxon>
        <taxon>eudicotyledons</taxon>
        <taxon>Gunneridae</taxon>
        <taxon>Pentapetalae</taxon>
        <taxon>rosids</taxon>
        <taxon>Vitales</taxon>
        <taxon>Vitaceae</taxon>
        <taxon>Viteae</taxon>
        <taxon>Vitis</taxon>
    </lineage>
</organism>
<gene>
    <name evidence="1" type="primary">ycf4</name>
</gene>
<feature type="chain" id="PRO_0000275677" description="Photosystem I assembly protein Ycf4">
    <location>
        <begin position="1"/>
        <end position="186"/>
    </location>
</feature>
<feature type="transmembrane region" description="Helical" evidence="1">
    <location>
        <begin position="22"/>
        <end position="42"/>
    </location>
</feature>
<feature type="transmembrane region" description="Helical" evidence="1">
    <location>
        <begin position="57"/>
        <end position="77"/>
    </location>
</feature>
<name>YCF4_VITVI</name>
<protein>
    <recommendedName>
        <fullName evidence="1">Photosystem I assembly protein Ycf4</fullName>
    </recommendedName>
</protein>
<proteinExistence type="inferred from homology"/>
<keyword id="KW-0150">Chloroplast</keyword>
<keyword id="KW-0472">Membrane</keyword>
<keyword id="KW-0602">Photosynthesis</keyword>
<keyword id="KW-0934">Plastid</keyword>
<keyword id="KW-1185">Reference proteome</keyword>
<keyword id="KW-0793">Thylakoid</keyword>
<keyword id="KW-0812">Transmembrane</keyword>
<keyword id="KW-1133">Transmembrane helix</keyword>